<evidence type="ECO:0000255" key="1">
    <source>
        <dbReference type="HAMAP-Rule" id="MF_01690"/>
    </source>
</evidence>
<protein>
    <recommendedName>
        <fullName evidence="1">Succinyl-diaminopimelate desuccinylase</fullName>
        <shortName evidence="1">SDAP desuccinylase</shortName>
        <ecNumber evidence="1">3.5.1.18</ecNumber>
    </recommendedName>
    <alternativeName>
        <fullName evidence="1">N-succinyl-LL-2,6-diaminoheptanedioate amidohydrolase</fullName>
    </alternativeName>
</protein>
<gene>
    <name evidence="1" type="primary">dapE</name>
    <name type="ordered locus">lpp0948</name>
</gene>
<reference key="1">
    <citation type="journal article" date="2004" name="Nat. Genet.">
        <title>Evidence in the Legionella pneumophila genome for exploitation of host cell functions and high genome plasticity.</title>
        <authorList>
            <person name="Cazalet C."/>
            <person name="Rusniok C."/>
            <person name="Brueggemann H."/>
            <person name="Zidane N."/>
            <person name="Magnier A."/>
            <person name="Ma L."/>
            <person name="Tichit M."/>
            <person name="Jarraud S."/>
            <person name="Bouchier C."/>
            <person name="Vandenesch F."/>
            <person name="Kunst F."/>
            <person name="Etienne J."/>
            <person name="Glaser P."/>
            <person name="Buchrieser C."/>
        </authorList>
    </citation>
    <scope>NUCLEOTIDE SEQUENCE [LARGE SCALE GENOMIC DNA]</scope>
    <source>
        <strain>Paris</strain>
    </source>
</reference>
<accession>Q5X6L7</accession>
<organism>
    <name type="scientific">Legionella pneumophila (strain Paris)</name>
    <dbReference type="NCBI Taxonomy" id="297246"/>
    <lineage>
        <taxon>Bacteria</taxon>
        <taxon>Pseudomonadati</taxon>
        <taxon>Pseudomonadota</taxon>
        <taxon>Gammaproteobacteria</taxon>
        <taxon>Legionellales</taxon>
        <taxon>Legionellaceae</taxon>
        <taxon>Legionella</taxon>
    </lineage>
</organism>
<sequence length="377" mass="41482">MTDIKQILTDLIGFPSITPEDAGCQKYMIQFLEQLGFTCQQLNNGPVSNFFACYGKIGPLLVFAGHTDVVPVGEVSKWDTDPFSLEEKSGVLYGRGVADMKGSLACMLHMARRFIKTYPSFPGRLGFLITSGEEGDEFNLGTPYVMQKLEQQGIVIDYCIVGEPSSSLKAGDVIKIGRRGSLSAKIHLSGKQGHVAYPHLADNPIHRISPVLAELTSMQWDNGNAFFPPTSMQITYIHCGGHAGNIIPGELNLHLNFRYSTEQTDESLKTRVINAFTHHNLNPAIEWRLNGEPFLTNKGILLESCKQTVLEHIGTLPELSTSGGTSDGRFIAPYGVEVIELGLVNATIHQVNECTSLQDLNTLETMYFSICEKLLID</sequence>
<comment type="function">
    <text evidence="1">Catalyzes the hydrolysis of N-succinyl-L,L-diaminopimelic acid (SDAP), forming succinate and LL-2,6-diaminopimelate (DAP), an intermediate involved in the bacterial biosynthesis of lysine and meso-diaminopimelic acid, an essential component of bacterial cell walls.</text>
</comment>
<comment type="catalytic activity">
    <reaction evidence="1">
        <text>N-succinyl-(2S,6S)-2,6-diaminopimelate + H2O = (2S,6S)-2,6-diaminopimelate + succinate</text>
        <dbReference type="Rhea" id="RHEA:22608"/>
        <dbReference type="ChEBI" id="CHEBI:15377"/>
        <dbReference type="ChEBI" id="CHEBI:30031"/>
        <dbReference type="ChEBI" id="CHEBI:57609"/>
        <dbReference type="ChEBI" id="CHEBI:58087"/>
        <dbReference type="EC" id="3.5.1.18"/>
    </reaction>
</comment>
<comment type="cofactor">
    <cofactor evidence="1">
        <name>Zn(2+)</name>
        <dbReference type="ChEBI" id="CHEBI:29105"/>
    </cofactor>
    <cofactor evidence="1">
        <name>Co(2+)</name>
        <dbReference type="ChEBI" id="CHEBI:48828"/>
    </cofactor>
    <text evidence="1">Binds 2 Zn(2+) or Co(2+) ions per subunit.</text>
</comment>
<comment type="pathway">
    <text evidence="1">Amino-acid biosynthesis; L-lysine biosynthesis via DAP pathway; LL-2,6-diaminopimelate from (S)-tetrahydrodipicolinate (succinylase route): step 3/3.</text>
</comment>
<comment type="subunit">
    <text evidence="1">Homodimer.</text>
</comment>
<comment type="similarity">
    <text evidence="1">Belongs to the peptidase M20A family. DapE subfamily.</text>
</comment>
<feature type="chain" id="PRO_0000375600" description="Succinyl-diaminopimelate desuccinylase">
    <location>
        <begin position="1"/>
        <end position="377"/>
    </location>
</feature>
<feature type="active site" evidence="1">
    <location>
        <position position="68"/>
    </location>
</feature>
<feature type="active site" description="Proton acceptor" evidence="1">
    <location>
        <position position="133"/>
    </location>
</feature>
<feature type="binding site" evidence="1">
    <location>
        <position position="66"/>
    </location>
    <ligand>
        <name>Zn(2+)</name>
        <dbReference type="ChEBI" id="CHEBI:29105"/>
        <label>1</label>
    </ligand>
</feature>
<feature type="binding site" evidence="1">
    <location>
        <position position="99"/>
    </location>
    <ligand>
        <name>Zn(2+)</name>
        <dbReference type="ChEBI" id="CHEBI:29105"/>
        <label>1</label>
    </ligand>
</feature>
<feature type="binding site" evidence="1">
    <location>
        <position position="99"/>
    </location>
    <ligand>
        <name>Zn(2+)</name>
        <dbReference type="ChEBI" id="CHEBI:29105"/>
        <label>2</label>
    </ligand>
</feature>
<feature type="binding site" evidence="1">
    <location>
        <position position="134"/>
    </location>
    <ligand>
        <name>Zn(2+)</name>
        <dbReference type="ChEBI" id="CHEBI:29105"/>
        <label>2</label>
    </ligand>
</feature>
<feature type="binding site" evidence="1">
    <location>
        <position position="163"/>
    </location>
    <ligand>
        <name>Zn(2+)</name>
        <dbReference type="ChEBI" id="CHEBI:29105"/>
        <label>1</label>
    </ligand>
</feature>
<feature type="binding site" evidence="1">
    <location>
        <position position="349"/>
    </location>
    <ligand>
        <name>Zn(2+)</name>
        <dbReference type="ChEBI" id="CHEBI:29105"/>
        <label>2</label>
    </ligand>
</feature>
<name>DAPE_LEGPA</name>
<proteinExistence type="inferred from homology"/>
<dbReference type="EC" id="3.5.1.18" evidence="1"/>
<dbReference type="EMBL" id="CR628336">
    <property type="protein sequence ID" value="CAH12099.1"/>
    <property type="molecule type" value="Genomic_DNA"/>
</dbReference>
<dbReference type="RefSeq" id="WP_010946622.1">
    <property type="nucleotide sequence ID" value="NC_006368.1"/>
</dbReference>
<dbReference type="SMR" id="Q5X6L7"/>
<dbReference type="GeneID" id="57034875"/>
<dbReference type="KEGG" id="lpp:lpp0948"/>
<dbReference type="LegioList" id="lpp0948"/>
<dbReference type="HOGENOM" id="CLU_021802_4_0_6"/>
<dbReference type="UniPathway" id="UPA00034">
    <property type="reaction ID" value="UER00021"/>
</dbReference>
<dbReference type="GO" id="GO:0008777">
    <property type="term" value="F:acetylornithine deacetylase activity"/>
    <property type="evidence" value="ECO:0007669"/>
    <property type="project" value="TreeGrafter"/>
</dbReference>
<dbReference type="GO" id="GO:0050897">
    <property type="term" value="F:cobalt ion binding"/>
    <property type="evidence" value="ECO:0007669"/>
    <property type="project" value="UniProtKB-UniRule"/>
</dbReference>
<dbReference type="GO" id="GO:0009014">
    <property type="term" value="F:succinyl-diaminopimelate desuccinylase activity"/>
    <property type="evidence" value="ECO:0007669"/>
    <property type="project" value="UniProtKB-UniRule"/>
</dbReference>
<dbReference type="GO" id="GO:0008270">
    <property type="term" value="F:zinc ion binding"/>
    <property type="evidence" value="ECO:0007669"/>
    <property type="project" value="UniProtKB-UniRule"/>
</dbReference>
<dbReference type="GO" id="GO:0019877">
    <property type="term" value="P:diaminopimelate biosynthetic process"/>
    <property type="evidence" value="ECO:0007669"/>
    <property type="project" value="UniProtKB-UniRule"/>
</dbReference>
<dbReference type="GO" id="GO:0006526">
    <property type="term" value="P:L-arginine biosynthetic process"/>
    <property type="evidence" value="ECO:0007669"/>
    <property type="project" value="TreeGrafter"/>
</dbReference>
<dbReference type="GO" id="GO:0009089">
    <property type="term" value="P:lysine biosynthetic process via diaminopimelate"/>
    <property type="evidence" value="ECO:0007669"/>
    <property type="project" value="UniProtKB-UniRule"/>
</dbReference>
<dbReference type="CDD" id="cd03891">
    <property type="entry name" value="M20_DapE_proteobac"/>
    <property type="match status" value="1"/>
</dbReference>
<dbReference type="Gene3D" id="3.40.630.10">
    <property type="entry name" value="Zn peptidases"/>
    <property type="match status" value="2"/>
</dbReference>
<dbReference type="HAMAP" id="MF_01690">
    <property type="entry name" value="DapE"/>
    <property type="match status" value="1"/>
</dbReference>
<dbReference type="InterPro" id="IPR036264">
    <property type="entry name" value="Bact_exopeptidase_dim_dom"/>
</dbReference>
<dbReference type="InterPro" id="IPR005941">
    <property type="entry name" value="DapE_proteobac"/>
</dbReference>
<dbReference type="InterPro" id="IPR002933">
    <property type="entry name" value="Peptidase_M20"/>
</dbReference>
<dbReference type="InterPro" id="IPR011650">
    <property type="entry name" value="Peptidase_M20_dimer"/>
</dbReference>
<dbReference type="InterPro" id="IPR050072">
    <property type="entry name" value="Peptidase_M20A"/>
</dbReference>
<dbReference type="NCBIfam" id="TIGR01246">
    <property type="entry name" value="dapE_proteo"/>
    <property type="match status" value="1"/>
</dbReference>
<dbReference type="NCBIfam" id="NF009557">
    <property type="entry name" value="PRK13009.1"/>
    <property type="match status" value="1"/>
</dbReference>
<dbReference type="PANTHER" id="PTHR43808">
    <property type="entry name" value="ACETYLORNITHINE DEACETYLASE"/>
    <property type="match status" value="1"/>
</dbReference>
<dbReference type="PANTHER" id="PTHR43808:SF31">
    <property type="entry name" value="N-ACETYL-L-CITRULLINE DEACETYLASE"/>
    <property type="match status" value="1"/>
</dbReference>
<dbReference type="Pfam" id="PF07687">
    <property type="entry name" value="M20_dimer"/>
    <property type="match status" value="1"/>
</dbReference>
<dbReference type="Pfam" id="PF01546">
    <property type="entry name" value="Peptidase_M20"/>
    <property type="match status" value="1"/>
</dbReference>
<dbReference type="SUPFAM" id="SSF55031">
    <property type="entry name" value="Bacterial exopeptidase dimerisation domain"/>
    <property type="match status" value="1"/>
</dbReference>
<dbReference type="SUPFAM" id="SSF53187">
    <property type="entry name" value="Zn-dependent exopeptidases"/>
    <property type="match status" value="1"/>
</dbReference>
<keyword id="KW-0028">Amino-acid biosynthesis</keyword>
<keyword id="KW-0170">Cobalt</keyword>
<keyword id="KW-0220">Diaminopimelate biosynthesis</keyword>
<keyword id="KW-0378">Hydrolase</keyword>
<keyword id="KW-0457">Lysine biosynthesis</keyword>
<keyword id="KW-0479">Metal-binding</keyword>
<keyword id="KW-0862">Zinc</keyword>